<protein>
    <recommendedName>
        <fullName evidence="1">Inositol-3-phosphate synthase 1</fullName>
        <shortName evidence="1">IPS 1</shortName>
        <ecNumber evidence="4">5.5.1.4</ecNumber>
    </recommendedName>
    <alternativeName>
        <fullName evidence="5">Myo-inositol 1-phosphate synthase</fullName>
        <shortName evidence="1">MI-1-P synthase</shortName>
        <shortName evidence="1">MIP synthase</shortName>
        <shortName evidence="5">MIPS</shortName>
    </alternativeName>
</protein>
<comment type="function">
    <text evidence="3 4">Key enzyme in myo-inositol biosynthesis pathway that catalyzes the conversion of glucose 6-phosphate to 1D-myo-inositol 3-phosphate in a NAD-dependent manner.</text>
</comment>
<comment type="catalytic activity">
    <reaction evidence="4">
        <text>D-glucose 6-phosphate = 1D-myo-inositol 3-phosphate</text>
        <dbReference type="Rhea" id="RHEA:10716"/>
        <dbReference type="ChEBI" id="CHEBI:58401"/>
        <dbReference type="ChEBI" id="CHEBI:61548"/>
        <dbReference type="EC" id="5.5.1.4"/>
    </reaction>
</comment>
<comment type="cofactor">
    <cofactor evidence="4">
        <name>NAD(+)</name>
        <dbReference type="ChEBI" id="CHEBI:57540"/>
    </cofactor>
</comment>
<comment type="pathway">
    <text evidence="6">Polyol metabolism; myo-inositol biosynthesis; myo-inositol from D-glucose 6-phosphate: step 1/2.</text>
</comment>
<comment type="subunit">
    <text evidence="4">Homotetramer.</text>
</comment>
<comment type="subcellular location">
    <subcellularLocation>
        <location evidence="2">Membrane</location>
        <topology evidence="2">Single-pass membrane protein</topology>
    </subcellularLocation>
</comment>
<comment type="disruption phenotype">
    <text evidence="3 4">Phosphatidylinositol dihydroceramide (PI-DHC) and phosphatidylinositol diacylglycerol (PI-DAG) are absent, phosphoceramide (IPC) levels are severely reduced and ceramide levels are increased (PubMed:35080445, PubMed:35725777). Inositol absent from capsular glycosyl residues (PubMed:35725777). Abnormal capsule morphology (PubMed:35725777). Results in a mild growth defect (PubMed:35080445, PubMed:35725777). Sensitive to cathelicidin LL-37 (PubMed:35725777). Abnormal RNA level of genes involved in capsule biosynthesis (PubMed:35725777). Does not appear to affect production of outer membrane vesicles (OMVs) or OMV cargo selection (PubMed:35080445).</text>
</comment>
<comment type="similarity">
    <text evidence="6">Belongs to the myo-inositol 1-phosphate synthase family.</text>
</comment>
<dbReference type="EC" id="5.5.1.4" evidence="4"/>
<dbReference type="EMBL" id="AE015928">
    <property type="protein sequence ID" value="AAO76633.1"/>
    <property type="molecule type" value="Genomic_DNA"/>
</dbReference>
<dbReference type="RefSeq" id="NP_810439.1">
    <property type="nucleotide sequence ID" value="NC_004663.1"/>
</dbReference>
<dbReference type="RefSeq" id="WP_008762240.1">
    <property type="nucleotide sequence ID" value="NZ_UYXG01000006.1"/>
</dbReference>
<dbReference type="PDB" id="7NWR">
    <property type="method" value="X-ray"/>
    <property type="resolution" value="2.90 A"/>
    <property type="chains" value="A/B=4-303"/>
</dbReference>
<dbReference type="PDBsum" id="7NWR"/>
<dbReference type="SMR" id="Q8A7J8"/>
<dbReference type="STRING" id="226186.BT_1526"/>
<dbReference type="PaxDb" id="226186-BT_1526"/>
<dbReference type="EnsemblBacteria" id="AAO76633">
    <property type="protein sequence ID" value="AAO76633"/>
    <property type="gene ID" value="BT_1526"/>
</dbReference>
<dbReference type="KEGG" id="bth:BT_1526"/>
<dbReference type="PATRIC" id="fig|226186.12.peg.1559"/>
<dbReference type="eggNOG" id="COG1260">
    <property type="taxonomic scope" value="Bacteria"/>
</dbReference>
<dbReference type="HOGENOM" id="CLU_021486_0_0_10"/>
<dbReference type="InParanoid" id="Q8A7J8"/>
<dbReference type="OrthoDB" id="729130at2"/>
<dbReference type="UniPathway" id="UPA00823">
    <property type="reaction ID" value="UER00787"/>
</dbReference>
<dbReference type="Proteomes" id="UP000001414">
    <property type="component" value="Chromosome"/>
</dbReference>
<dbReference type="GO" id="GO:0005737">
    <property type="term" value="C:cytoplasm"/>
    <property type="evidence" value="ECO:0000318"/>
    <property type="project" value="GO_Central"/>
</dbReference>
<dbReference type="GO" id="GO:0016020">
    <property type="term" value="C:membrane"/>
    <property type="evidence" value="ECO:0007669"/>
    <property type="project" value="UniProtKB-SubCell"/>
</dbReference>
<dbReference type="GO" id="GO:0004512">
    <property type="term" value="F:inositol-3-phosphate synthase activity"/>
    <property type="evidence" value="ECO:0000314"/>
    <property type="project" value="UniProtKB"/>
</dbReference>
<dbReference type="GO" id="GO:0006021">
    <property type="term" value="P:inositol biosynthetic process"/>
    <property type="evidence" value="ECO:0000318"/>
    <property type="project" value="GO_Central"/>
</dbReference>
<dbReference type="GO" id="GO:0008654">
    <property type="term" value="P:phospholipid biosynthetic process"/>
    <property type="evidence" value="ECO:0007669"/>
    <property type="project" value="UniProtKB-KW"/>
</dbReference>
<dbReference type="Gene3D" id="3.30.360.10">
    <property type="entry name" value="Dihydrodipicolinate Reductase, domain 2"/>
    <property type="match status" value="1"/>
</dbReference>
<dbReference type="Gene3D" id="3.40.50.720">
    <property type="entry name" value="NAD(P)-binding Rossmann-like Domain"/>
    <property type="match status" value="1"/>
</dbReference>
<dbReference type="InterPro" id="IPR002587">
    <property type="entry name" value="Myo-inos-1-P_Synthase"/>
</dbReference>
<dbReference type="InterPro" id="IPR013021">
    <property type="entry name" value="Myo-inos-1-P_Synthase_GAPDH"/>
</dbReference>
<dbReference type="InterPro" id="IPR036291">
    <property type="entry name" value="NAD(P)-bd_dom_sf"/>
</dbReference>
<dbReference type="PANTHER" id="PTHR11510">
    <property type="entry name" value="MYO-INOSITOL-1 PHOSPHATE SYNTHASE"/>
    <property type="match status" value="1"/>
</dbReference>
<dbReference type="Pfam" id="PF01658">
    <property type="entry name" value="Inos-1-P_synth"/>
    <property type="match status" value="1"/>
</dbReference>
<dbReference type="Pfam" id="PF07994">
    <property type="entry name" value="NAD_binding_5"/>
    <property type="match status" value="1"/>
</dbReference>
<dbReference type="PIRSF" id="PIRSF015578">
    <property type="entry name" value="Myoinos-ppht_syn"/>
    <property type="match status" value="1"/>
</dbReference>
<dbReference type="SUPFAM" id="SSF55347">
    <property type="entry name" value="Glyceraldehyde-3-phosphate dehydrogenase-like, C-terminal domain"/>
    <property type="match status" value="1"/>
</dbReference>
<dbReference type="SUPFAM" id="SSF51735">
    <property type="entry name" value="NAD(P)-binding Rossmann-fold domains"/>
    <property type="match status" value="1"/>
</dbReference>
<proteinExistence type="evidence at protein level"/>
<reference evidence="8" key="1">
    <citation type="journal article" date="2003" name="Science">
        <title>A genomic view of the human-Bacteroides thetaiotaomicron symbiosis.</title>
        <authorList>
            <person name="Xu J."/>
            <person name="Bjursell M.K."/>
            <person name="Himrod J."/>
            <person name="Deng S."/>
            <person name="Carmichael L.K."/>
            <person name="Chiang H.C."/>
            <person name="Hooper L.V."/>
            <person name="Gordon J.I."/>
        </authorList>
    </citation>
    <scope>NUCLEOTIDE SEQUENCE [LARGE SCALE GENOMIC DNA]</scope>
    <source>
        <strain evidence="8">ATCC 29148 / DSM 2079 / JCM 5827 / CCUG 10774 / NCTC 10582 / VPI-5482 / E50</strain>
    </source>
</reference>
<reference evidence="8" key="2">
    <citation type="journal article" date="2009" name="Proc. Natl. Acad. Sci. U.S.A.">
        <title>Characterizing a model human gut microbiota composed of members of its two dominant bacterial phyla.</title>
        <authorList>
            <person name="Mahowald M.A."/>
            <person name="Rey F.E."/>
            <person name="Seedorf H."/>
            <person name="Turnbaugh P.J."/>
            <person name="Fulton R.S."/>
            <person name="Wollam A."/>
            <person name="Shah N."/>
            <person name="Wang C."/>
            <person name="Magrini V."/>
            <person name="Wilson R.K."/>
            <person name="Cantarel B.L."/>
            <person name="Coutinho P.M."/>
            <person name="Henrissat B."/>
            <person name="Crock L.W."/>
            <person name="Russell A."/>
            <person name="Verberkmoes N.C."/>
            <person name="Hettich R.L."/>
            <person name="Gordon J.I."/>
        </authorList>
    </citation>
    <scope>NUCLEOTIDE SEQUENCE [LARGE SCALE GENOMIC DNA]</scope>
    <source>
        <strain evidence="8">ATCC 29148 / DSM 2079 / JCM 5827 / CCUG 10774 / NCTC 10582 / VPI-5482 / E50</strain>
    </source>
</reference>
<reference evidence="6" key="3">
    <citation type="journal article" date="2022" name="Microbiol. Spectr.">
        <title>Lipidomics Analysis of Outer Membrane Vesicles and Elucidation of the Inositol Phosphoceramide Biosynthetic Pathway in Bacteroides thetaiotaomicron.</title>
        <authorList>
            <person name="Sartorio M.G."/>
            <person name="Valguarnera E."/>
            <person name="Hsu F.F."/>
            <person name="Feldman M.F."/>
        </authorList>
    </citation>
    <scope>FUNCTION</scope>
    <scope>DISRUPTION PHENOTYPE</scope>
    <source>
        <strain evidence="5">ATCC 29148 / DSM 2079 / JCM 5827 / CCUG 10774 / NCTC 10582 / VPI-5482 / E50</strain>
    </source>
</reference>
<reference evidence="9" key="4">
    <citation type="journal article" date="2022" name="Nat. Microbiol.">
        <title>Characterization of inositol lipid metabolism in gut-associated Bacteroidetes.</title>
        <authorList>
            <person name="Heaver S.L."/>
            <person name="Le H.H."/>
            <person name="Tang P."/>
            <person name="Basle A."/>
            <person name="Mirretta Barone C."/>
            <person name="Vu D.L."/>
            <person name="Waters J.L."/>
            <person name="Marles-Wright J."/>
            <person name="Johnson E.L."/>
            <person name="Campopiano D.J."/>
            <person name="Ley R.E."/>
        </authorList>
    </citation>
    <scope>X-RAY CRYSTALLOGRAPHY (2.00 ANGSTROMS) IN COMPLEX WITH NAD+</scope>
    <scope>FUNCTION</scope>
    <scope>CATALYTIC ACTIVITY</scope>
    <scope>COFACTOR</scope>
    <scope>SUBUNIT</scope>
    <scope>DISRUPTION PHENOTYPE</scope>
</reference>
<sequence length="429" mass="48398">MKQEIKPATGRLGVLVVGVGGAVATTMIVGTLASRKGLAKPIGSITQLATMRMENNEEKLIKDVVPLTDLNDIVFGGWDIFPDNAYEAAMYAEVLKEKDLNGVKDELEAIKPMPAAFDHNWAKRLNGTHIKKAATRWEMVEQLRQDIRDFKAANNCERVVVLWAASTEIYIPLSDEHMSLAALEKAMKDNNTEVISPSMCYAYAAIAEDAPFVMGAPNLCVDTPAMWEFSKQKNVPISGKDFKSGQTLMKTVLAPMFKTRMLGVNGWFSTNILGNRDGEVLDDPDNFKTKEVSKLSVIDTIFEPEKYPDLYGDVYHKVRINYYPPRKDNKEAWDNIDIFGWMGYPMEIKVNFLCRDSILAAPIALDLVLFSDLAMRAGMCGIQTWLSFFCKSPMHDFEHQPEHDLFTQWRMVKQTLRNMIGEKEPDYLA</sequence>
<gene>
    <name evidence="7" type="ordered locus">BT_1526</name>
</gene>
<accession>Q8A7J8</accession>
<keyword id="KW-0002">3D-structure</keyword>
<keyword id="KW-0398">Inositol biosynthesis</keyword>
<keyword id="KW-0413">Isomerase</keyword>
<keyword id="KW-0444">Lipid biosynthesis</keyword>
<keyword id="KW-0443">Lipid metabolism</keyword>
<keyword id="KW-0472">Membrane</keyword>
<keyword id="KW-0520">NAD</keyword>
<keyword id="KW-0594">Phospholipid biosynthesis</keyword>
<keyword id="KW-1208">Phospholipid metabolism</keyword>
<keyword id="KW-1185">Reference proteome</keyword>
<keyword id="KW-0812">Transmembrane</keyword>
<keyword id="KW-1133">Transmembrane helix</keyword>
<feature type="chain" id="PRO_0000456696" description="Inositol-3-phosphate synthase 1">
    <location>
        <begin position="1"/>
        <end position="429"/>
    </location>
</feature>
<feature type="transmembrane region" description="Helical" evidence="2">
    <location>
        <begin position="12"/>
        <end position="32"/>
    </location>
</feature>
<feature type="binding site" evidence="4 9">
    <location>
        <position position="22"/>
    </location>
    <ligand>
        <name>NAD(+)</name>
        <dbReference type="ChEBI" id="CHEBI:57540"/>
    </ligand>
</feature>
<feature type="binding site" evidence="4 9">
    <location>
        <position position="23"/>
    </location>
    <ligand>
        <name>NAD(+)</name>
        <dbReference type="ChEBI" id="CHEBI:57540"/>
    </ligand>
</feature>
<feature type="binding site" evidence="4 9">
    <location>
        <position position="79"/>
    </location>
    <ligand>
        <name>NAD(+)</name>
        <dbReference type="ChEBI" id="CHEBI:57540"/>
    </ligand>
</feature>
<feature type="binding site" evidence="4 9">
    <location>
        <position position="116"/>
    </location>
    <ligand>
        <name>NAD(+)</name>
        <dbReference type="ChEBI" id="CHEBI:57540"/>
    </ligand>
</feature>
<feature type="binding site" evidence="4 9">
    <location>
        <position position="165"/>
    </location>
    <ligand>
        <name>NAD(+)</name>
        <dbReference type="ChEBI" id="CHEBI:57540"/>
    </ligand>
</feature>
<feature type="binding site" evidence="4 9">
    <location>
        <position position="167"/>
    </location>
    <ligand>
        <name>NAD(+)</name>
        <dbReference type="ChEBI" id="CHEBI:57540"/>
    </ligand>
</feature>
<feature type="binding site" evidence="4 9">
    <location>
        <position position="201"/>
    </location>
    <ligand>
        <name>NAD(+)</name>
        <dbReference type="ChEBI" id="CHEBI:57540"/>
    </ligand>
</feature>
<feature type="binding site" evidence="4 9">
    <location>
        <position position="244"/>
    </location>
    <ligand>
        <name>NAD(+)</name>
        <dbReference type="ChEBI" id="CHEBI:57540"/>
    </ligand>
</feature>
<feature type="binding site" evidence="4 9">
    <location>
        <position position="276"/>
    </location>
    <ligand>
        <name>NAD(+)</name>
        <dbReference type="ChEBI" id="CHEBI:57540"/>
    </ligand>
</feature>
<feature type="binding site" evidence="4 9">
    <location>
        <position position="277"/>
    </location>
    <ligand>
        <name>NAD(+)</name>
        <dbReference type="ChEBI" id="CHEBI:57540"/>
    </ligand>
</feature>
<feature type="binding site" evidence="4 9">
    <location>
        <position position="290"/>
    </location>
    <ligand>
        <name>NAD(+)</name>
        <dbReference type="ChEBI" id="CHEBI:57540"/>
    </ligand>
</feature>
<feature type="strand" evidence="10">
    <location>
        <begin position="10"/>
        <end position="17"/>
    </location>
</feature>
<feature type="turn" evidence="10">
    <location>
        <begin position="18"/>
        <end position="20"/>
    </location>
</feature>
<feature type="helix" evidence="10">
    <location>
        <begin position="22"/>
        <end position="35"/>
    </location>
</feature>
<feature type="helix" evidence="10">
    <location>
        <begin position="45"/>
        <end position="48"/>
    </location>
</feature>
<feature type="strand" evidence="10">
    <location>
        <begin position="50"/>
        <end position="52"/>
    </location>
</feature>
<feature type="strand" evidence="10">
    <location>
        <begin position="58"/>
        <end position="60"/>
    </location>
</feature>
<feature type="helix" evidence="10">
    <location>
        <begin position="61"/>
        <end position="63"/>
    </location>
</feature>
<feature type="helix" evidence="10">
    <location>
        <begin position="70"/>
        <end position="72"/>
    </location>
</feature>
<feature type="strand" evidence="10">
    <location>
        <begin position="73"/>
        <end position="81"/>
    </location>
</feature>
<feature type="helix" evidence="10">
    <location>
        <begin position="85"/>
        <end position="92"/>
    </location>
</feature>
<feature type="helix" evidence="10">
    <location>
        <begin position="97"/>
        <end position="101"/>
    </location>
</feature>
<feature type="helix" evidence="10">
    <location>
        <begin position="104"/>
        <end position="108"/>
    </location>
</feature>
<feature type="strand" evidence="10">
    <location>
        <begin position="113"/>
        <end position="115"/>
    </location>
</feature>
<feature type="helix" evidence="10">
    <location>
        <begin position="119"/>
        <end position="121"/>
    </location>
</feature>
<feature type="helix" evidence="10">
    <location>
        <begin position="136"/>
        <end position="154"/>
    </location>
</feature>
<feature type="strand" evidence="10">
    <location>
        <begin position="156"/>
        <end position="163"/>
    </location>
</feature>
<feature type="helix" evidence="10">
    <location>
        <begin position="175"/>
        <end position="177"/>
    </location>
</feature>
<feature type="helix" evidence="10">
    <location>
        <begin position="180"/>
        <end position="188"/>
    </location>
</feature>
<feature type="turn" evidence="10">
    <location>
        <begin position="192"/>
        <end position="194"/>
    </location>
</feature>
<feature type="helix" evidence="10">
    <location>
        <begin position="197"/>
        <end position="207"/>
    </location>
</feature>
<feature type="strand" evidence="10">
    <location>
        <begin position="212"/>
        <end position="214"/>
    </location>
</feature>
<feature type="strand" evidence="10">
    <location>
        <begin position="219"/>
        <end position="223"/>
    </location>
</feature>
<feature type="helix" evidence="10">
    <location>
        <begin position="224"/>
        <end position="233"/>
    </location>
</feature>
<feature type="strand" evidence="10">
    <location>
        <begin position="236"/>
        <end position="239"/>
    </location>
</feature>
<feature type="helix" evidence="10">
    <location>
        <begin position="246"/>
        <end position="259"/>
    </location>
</feature>
<feature type="strand" evidence="10">
    <location>
        <begin position="263"/>
        <end position="273"/>
    </location>
</feature>
<feature type="helix" evidence="10">
    <location>
        <begin position="276"/>
        <end position="281"/>
    </location>
</feature>
<feature type="helix" evidence="10">
    <location>
        <begin position="284"/>
        <end position="295"/>
    </location>
</feature>
<feature type="helix" evidence="10">
    <location>
        <begin position="299"/>
        <end position="302"/>
    </location>
</feature>
<feature type="turn" evidence="10">
    <location>
        <begin position="304"/>
        <end position="306"/>
    </location>
</feature>
<feature type="helix" evidence="10">
    <location>
        <begin position="308"/>
        <end position="311"/>
    </location>
</feature>
<feature type="strand" evidence="10">
    <location>
        <begin position="315"/>
        <end position="318"/>
    </location>
</feature>
<feature type="helix" evidence="10">
    <location>
        <begin position="324"/>
        <end position="326"/>
    </location>
</feature>
<feature type="strand" evidence="10">
    <location>
        <begin position="331"/>
        <end position="339"/>
    </location>
</feature>
<feature type="helix" evidence="10">
    <location>
        <begin position="341"/>
        <end position="343"/>
    </location>
</feature>
<feature type="strand" evidence="10">
    <location>
        <begin position="345"/>
        <end position="353"/>
    </location>
</feature>
<feature type="helix" evidence="10">
    <location>
        <begin position="356"/>
        <end position="376"/>
    </location>
</feature>
<feature type="helix" evidence="10">
    <location>
        <begin position="384"/>
        <end position="389"/>
    </location>
</feature>
<feature type="strand" evidence="10">
    <location>
        <begin position="390"/>
        <end position="392"/>
    </location>
</feature>
<feature type="helix" evidence="10">
    <location>
        <begin position="405"/>
        <end position="419"/>
    </location>
</feature>
<evidence type="ECO:0000250" key="1">
    <source>
        <dbReference type="UniProtKB" id="Q9NPH2"/>
    </source>
</evidence>
<evidence type="ECO:0000255" key="2"/>
<evidence type="ECO:0000269" key="3">
    <source>
    </source>
</evidence>
<evidence type="ECO:0000269" key="4">
    <source>
    </source>
</evidence>
<evidence type="ECO:0000303" key="5">
    <source>
    </source>
</evidence>
<evidence type="ECO:0000305" key="6"/>
<evidence type="ECO:0000312" key="7">
    <source>
        <dbReference type="EMBL" id="AAO76633.1"/>
    </source>
</evidence>
<evidence type="ECO:0000312" key="8">
    <source>
        <dbReference type="Proteomes" id="UP000001414"/>
    </source>
</evidence>
<evidence type="ECO:0007744" key="9">
    <source>
        <dbReference type="PDB" id="7NWR"/>
    </source>
</evidence>
<evidence type="ECO:0007829" key="10">
    <source>
        <dbReference type="PDB" id="7NWR"/>
    </source>
</evidence>
<name>INO1_BACTN</name>
<organism evidence="8">
    <name type="scientific">Bacteroides thetaiotaomicron (strain ATCC 29148 / DSM 2079 / JCM 5827 / CCUG 10774 / NCTC 10582 / VPI-5482 / E50)</name>
    <dbReference type="NCBI Taxonomy" id="226186"/>
    <lineage>
        <taxon>Bacteria</taxon>
        <taxon>Pseudomonadati</taxon>
        <taxon>Bacteroidota</taxon>
        <taxon>Bacteroidia</taxon>
        <taxon>Bacteroidales</taxon>
        <taxon>Bacteroidaceae</taxon>
        <taxon>Bacteroides</taxon>
    </lineage>
</organism>